<feature type="chain" id="PRO_1000185664" description="UPF0502 protein YceH">
    <location>
        <begin position="1"/>
        <end position="215"/>
    </location>
</feature>
<feature type="modified residue" description="N6-acetyllysine" evidence="1">
    <location>
        <position position="80"/>
    </location>
</feature>
<protein>
    <recommendedName>
        <fullName evidence="1">UPF0502 protein YceH</fullName>
    </recommendedName>
</protein>
<accession>B7MTJ8</accession>
<name>YCEH_ECO81</name>
<evidence type="ECO:0000255" key="1">
    <source>
        <dbReference type="HAMAP-Rule" id="MF_01584"/>
    </source>
</evidence>
<comment type="similarity">
    <text evidence="1">Belongs to the UPF0502 family.</text>
</comment>
<keyword id="KW-0007">Acetylation</keyword>
<dbReference type="EMBL" id="CU928162">
    <property type="protein sequence ID" value="CAR07412.1"/>
    <property type="molecule type" value="Genomic_DNA"/>
</dbReference>
<dbReference type="RefSeq" id="WP_000877139.1">
    <property type="nucleotide sequence ID" value="NC_011745.1"/>
</dbReference>
<dbReference type="SMR" id="B7MTJ8"/>
<dbReference type="KEGG" id="ecq:ECED1_1211"/>
<dbReference type="HOGENOM" id="CLU_057831_2_0_6"/>
<dbReference type="Proteomes" id="UP000000748">
    <property type="component" value="Chromosome"/>
</dbReference>
<dbReference type="FunFam" id="1.10.10.10:FF:000196">
    <property type="entry name" value="UPF0502 protein YceH"/>
    <property type="match status" value="1"/>
</dbReference>
<dbReference type="FunFam" id="1.10.10.10:FF:000241">
    <property type="entry name" value="UPF0502 protein YceH"/>
    <property type="match status" value="1"/>
</dbReference>
<dbReference type="Gene3D" id="1.10.10.10">
    <property type="entry name" value="Winged helix-like DNA-binding domain superfamily/Winged helix DNA-binding domain"/>
    <property type="match status" value="2"/>
</dbReference>
<dbReference type="HAMAP" id="MF_01584">
    <property type="entry name" value="UPF0502"/>
    <property type="match status" value="1"/>
</dbReference>
<dbReference type="InterPro" id="IPR007432">
    <property type="entry name" value="DUF480"/>
</dbReference>
<dbReference type="InterPro" id="IPR036388">
    <property type="entry name" value="WH-like_DNA-bd_sf"/>
</dbReference>
<dbReference type="InterPro" id="IPR036390">
    <property type="entry name" value="WH_DNA-bd_sf"/>
</dbReference>
<dbReference type="NCBIfam" id="NF008413">
    <property type="entry name" value="PRK11239.1"/>
    <property type="match status" value="1"/>
</dbReference>
<dbReference type="PANTHER" id="PTHR38768">
    <property type="entry name" value="UPF0502 PROTEIN YCEH"/>
    <property type="match status" value="1"/>
</dbReference>
<dbReference type="PANTHER" id="PTHR38768:SF1">
    <property type="entry name" value="UPF0502 PROTEIN YCEH"/>
    <property type="match status" value="1"/>
</dbReference>
<dbReference type="Pfam" id="PF04337">
    <property type="entry name" value="DUF480"/>
    <property type="match status" value="1"/>
</dbReference>
<dbReference type="SUPFAM" id="SSF46785">
    <property type="entry name" value="Winged helix' DNA-binding domain"/>
    <property type="match status" value="2"/>
</dbReference>
<proteinExistence type="inferred from homology"/>
<sequence>MKYQLTVMEARVIGCLLEKQVTTPEQYPLSVNGVVTACNQKTNREPVMNLSESEVQEQLDNLVKRHYLRTVSGFGNRVTKYEQRFCNSEFGDLKLSAAEVALITTLLLRGAQTPGELRSRAARMYEFSDMAEVESTLEQLANREDGPFVVRLAREPGKRESRYMHLFSGEVENPPAVTDMSNAADGDLQARVEALEIEVAELKQRLDSLLAHLGD</sequence>
<organism>
    <name type="scientific">Escherichia coli O81 (strain ED1a)</name>
    <dbReference type="NCBI Taxonomy" id="585397"/>
    <lineage>
        <taxon>Bacteria</taxon>
        <taxon>Pseudomonadati</taxon>
        <taxon>Pseudomonadota</taxon>
        <taxon>Gammaproteobacteria</taxon>
        <taxon>Enterobacterales</taxon>
        <taxon>Enterobacteriaceae</taxon>
        <taxon>Escherichia</taxon>
    </lineage>
</organism>
<reference key="1">
    <citation type="journal article" date="2009" name="PLoS Genet.">
        <title>Organised genome dynamics in the Escherichia coli species results in highly diverse adaptive paths.</title>
        <authorList>
            <person name="Touchon M."/>
            <person name="Hoede C."/>
            <person name="Tenaillon O."/>
            <person name="Barbe V."/>
            <person name="Baeriswyl S."/>
            <person name="Bidet P."/>
            <person name="Bingen E."/>
            <person name="Bonacorsi S."/>
            <person name="Bouchier C."/>
            <person name="Bouvet O."/>
            <person name="Calteau A."/>
            <person name="Chiapello H."/>
            <person name="Clermont O."/>
            <person name="Cruveiller S."/>
            <person name="Danchin A."/>
            <person name="Diard M."/>
            <person name="Dossat C."/>
            <person name="Karoui M.E."/>
            <person name="Frapy E."/>
            <person name="Garry L."/>
            <person name="Ghigo J.M."/>
            <person name="Gilles A.M."/>
            <person name="Johnson J."/>
            <person name="Le Bouguenec C."/>
            <person name="Lescat M."/>
            <person name="Mangenot S."/>
            <person name="Martinez-Jehanne V."/>
            <person name="Matic I."/>
            <person name="Nassif X."/>
            <person name="Oztas S."/>
            <person name="Petit M.A."/>
            <person name="Pichon C."/>
            <person name="Rouy Z."/>
            <person name="Ruf C.S."/>
            <person name="Schneider D."/>
            <person name="Tourret J."/>
            <person name="Vacherie B."/>
            <person name="Vallenet D."/>
            <person name="Medigue C."/>
            <person name="Rocha E.P.C."/>
            <person name="Denamur E."/>
        </authorList>
    </citation>
    <scope>NUCLEOTIDE SEQUENCE [LARGE SCALE GENOMIC DNA]</scope>
    <source>
        <strain>ED1a</strain>
    </source>
</reference>
<gene>
    <name evidence="1" type="primary">yceH</name>
    <name type="ordered locus">ECED1_1211</name>
</gene>